<protein>
    <recommendedName>
        <fullName evidence="1">1,4-dihydroxy-2-naphthoyl-CoA synthase</fullName>
        <shortName evidence="1">DHNA-CoA synthase</shortName>
        <ecNumber evidence="1">4.1.3.36</ecNumber>
    </recommendedName>
</protein>
<keyword id="KW-0456">Lyase</keyword>
<keyword id="KW-0474">Menaquinone biosynthesis</keyword>
<keyword id="KW-1185">Reference proteome</keyword>
<sequence>MQNPKDDVLYAPVEWIDHSEGYSDIRYHKSTDGIAKITINRPEVRNAFRPQTVKEMMTAFSDARFDENIGVIVLTGEGEKAFCSGGDQKVRGDYGGYKDDSGVHHLNVLDFQRDIRSCPKPVVAMVAGYAIGGGHVLHMLCDLTIAAENAIFGQTGPKVGSFDGGWGASYMARLVGQKKAREIWFLCRQYNAQEALDMGLVNTVVPYADLEKETVRWCREMLRNSPIAIRCLKAALNADCDGQAGLQELAGNATMLFYMTEEGQEGRNAFNEKRAPDFSKFRRNP</sequence>
<proteinExistence type="inferred from homology"/>
<gene>
    <name evidence="1" type="primary">menB</name>
    <name type="ordered locus">HI_0968</name>
</gene>
<accession>P44960</accession>
<organism>
    <name type="scientific">Haemophilus influenzae (strain ATCC 51907 / DSM 11121 / KW20 / Rd)</name>
    <dbReference type="NCBI Taxonomy" id="71421"/>
    <lineage>
        <taxon>Bacteria</taxon>
        <taxon>Pseudomonadati</taxon>
        <taxon>Pseudomonadota</taxon>
        <taxon>Gammaproteobacteria</taxon>
        <taxon>Pasteurellales</taxon>
        <taxon>Pasteurellaceae</taxon>
        <taxon>Haemophilus</taxon>
    </lineage>
</organism>
<evidence type="ECO:0000255" key="1">
    <source>
        <dbReference type="HAMAP-Rule" id="MF_01934"/>
    </source>
</evidence>
<comment type="function">
    <text evidence="1">Converts o-succinylbenzoyl-CoA (OSB-CoA) to 1,4-dihydroxy-2-naphthoyl-CoA (DHNA-CoA).</text>
</comment>
<comment type="catalytic activity">
    <reaction evidence="1">
        <text>2-succinylbenzoyl-CoA + H(+) = 1,4-dihydroxy-2-naphthoyl-CoA + H2O</text>
        <dbReference type="Rhea" id="RHEA:26562"/>
        <dbReference type="ChEBI" id="CHEBI:15377"/>
        <dbReference type="ChEBI" id="CHEBI:15378"/>
        <dbReference type="ChEBI" id="CHEBI:57364"/>
        <dbReference type="ChEBI" id="CHEBI:58897"/>
        <dbReference type="EC" id="4.1.3.36"/>
    </reaction>
</comment>
<comment type="cofactor">
    <cofactor evidence="1">
        <name>hydrogencarbonate</name>
        <dbReference type="ChEBI" id="CHEBI:17544"/>
    </cofactor>
</comment>
<comment type="pathway">
    <text evidence="1">Quinol/quinone metabolism; 1,4-dihydroxy-2-naphthoate biosynthesis; 1,4-dihydroxy-2-naphthoate from chorismate: step 6/7.</text>
</comment>
<comment type="pathway">
    <text evidence="1">Quinol/quinone metabolism; menaquinone biosynthesis.</text>
</comment>
<comment type="similarity">
    <text evidence="1">Belongs to the enoyl-CoA hydratase/isomerase family. MenB subfamily.</text>
</comment>
<dbReference type="EC" id="4.1.3.36" evidence="1"/>
<dbReference type="EMBL" id="L42023">
    <property type="protein sequence ID" value="AAC22625.1"/>
    <property type="molecule type" value="Genomic_DNA"/>
</dbReference>
<dbReference type="PIR" id="B64105">
    <property type="entry name" value="B64105"/>
</dbReference>
<dbReference type="RefSeq" id="NP_439129.1">
    <property type="nucleotide sequence ID" value="NC_000907.1"/>
</dbReference>
<dbReference type="SMR" id="P44960"/>
<dbReference type="STRING" id="71421.HI_0968"/>
<dbReference type="EnsemblBacteria" id="AAC22625">
    <property type="protein sequence ID" value="AAC22625"/>
    <property type="gene ID" value="HI_0968"/>
</dbReference>
<dbReference type="KEGG" id="hin:HI_0968"/>
<dbReference type="PATRIC" id="fig|71421.8.peg.1009"/>
<dbReference type="eggNOG" id="COG0447">
    <property type="taxonomic scope" value="Bacteria"/>
</dbReference>
<dbReference type="HOGENOM" id="CLU_009834_7_7_6"/>
<dbReference type="OrthoDB" id="9807606at2"/>
<dbReference type="PhylomeDB" id="P44960"/>
<dbReference type="BioCyc" id="HINF71421:G1GJ1-1009-MONOMER"/>
<dbReference type="UniPathway" id="UPA00079"/>
<dbReference type="UniPathway" id="UPA01057">
    <property type="reaction ID" value="UER00167"/>
</dbReference>
<dbReference type="Proteomes" id="UP000000579">
    <property type="component" value="Chromosome"/>
</dbReference>
<dbReference type="GO" id="GO:0005829">
    <property type="term" value="C:cytosol"/>
    <property type="evidence" value="ECO:0000318"/>
    <property type="project" value="GO_Central"/>
</dbReference>
<dbReference type="GO" id="GO:0008935">
    <property type="term" value="F:1,4-dihydroxy-2-naphthoyl-CoA synthase activity"/>
    <property type="evidence" value="ECO:0000318"/>
    <property type="project" value="GO_Central"/>
</dbReference>
<dbReference type="GO" id="GO:0009234">
    <property type="term" value="P:menaquinone biosynthetic process"/>
    <property type="evidence" value="ECO:0000318"/>
    <property type="project" value="GO_Central"/>
</dbReference>
<dbReference type="CDD" id="cd06558">
    <property type="entry name" value="crotonase-like"/>
    <property type="match status" value="1"/>
</dbReference>
<dbReference type="FunFam" id="1.10.12.10:FF:000002">
    <property type="entry name" value="1,4-dihydroxy-2-naphthoyl-CoA synthase"/>
    <property type="match status" value="1"/>
</dbReference>
<dbReference type="FunFam" id="3.90.226.10:FF:000003">
    <property type="entry name" value="1,4-dihydroxy-2-naphthoyl-CoA synthase"/>
    <property type="match status" value="1"/>
</dbReference>
<dbReference type="Gene3D" id="3.90.226.10">
    <property type="entry name" value="2-enoyl-CoA Hydratase, Chain A, domain 1"/>
    <property type="match status" value="1"/>
</dbReference>
<dbReference type="Gene3D" id="1.10.12.10">
    <property type="entry name" value="Lyase 2-enoyl-coa Hydratase, Chain A, domain 2"/>
    <property type="match status" value="1"/>
</dbReference>
<dbReference type="HAMAP" id="MF_01934">
    <property type="entry name" value="MenB"/>
    <property type="match status" value="1"/>
</dbReference>
<dbReference type="InterPro" id="IPR029045">
    <property type="entry name" value="ClpP/crotonase-like_dom_sf"/>
</dbReference>
<dbReference type="InterPro" id="IPR010198">
    <property type="entry name" value="DHNA-CoA_synthase_MenB"/>
</dbReference>
<dbReference type="InterPro" id="IPR018376">
    <property type="entry name" value="Enoyl-CoA_hyd/isom_CS"/>
</dbReference>
<dbReference type="InterPro" id="IPR001753">
    <property type="entry name" value="Enoyl-CoA_hydra/iso"/>
</dbReference>
<dbReference type="InterPro" id="IPR014748">
    <property type="entry name" value="Enoyl-CoA_hydra_C"/>
</dbReference>
<dbReference type="NCBIfam" id="TIGR01929">
    <property type="entry name" value="menB"/>
    <property type="match status" value="1"/>
</dbReference>
<dbReference type="NCBIfam" id="NF005637">
    <property type="entry name" value="PRK07396.1"/>
    <property type="match status" value="1"/>
</dbReference>
<dbReference type="PANTHER" id="PTHR43113:SF1">
    <property type="entry name" value="1,4-DIHYDROXY-2-NAPHTHOYL-COA SYNTHASE, PEROXISOMAL"/>
    <property type="match status" value="1"/>
</dbReference>
<dbReference type="PANTHER" id="PTHR43113">
    <property type="entry name" value="NUCLEOSIDE-DIPHOSPHATE-SUGAR EPIMERASE"/>
    <property type="match status" value="1"/>
</dbReference>
<dbReference type="Pfam" id="PF00378">
    <property type="entry name" value="ECH_1"/>
    <property type="match status" value="1"/>
</dbReference>
<dbReference type="SUPFAM" id="SSF52096">
    <property type="entry name" value="ClpP/crotonase"/>
    <property type="match status" value="1"/>
</dbReference>
<dbReference type="PROSITE" id="PS00166">
    <property type="entry name" value="ENOYL_COA_HYDRATASE"/>
    <property type="match status" value="1"/>
</dbReference>
<name>MENB_HAEIN</name>
<feature type="chain" id="PRO_0000109327" description="1,4-dihydroxy-2-naphthoyl-CoA synthase">
    <location>
        <begin position="1"/>
        <end position="285"/>
    </location>
</feature>
<feature type="binding site" description="in other chain" evidence="1">
    <location>
        <position position="45"/>
    </location>
    <ligand>
        <name>substrate</name>
        <note>ligand shared between two neighboring subunits</note>
    </ligand>
</feature>
<feature type="binding site" description="in other chain" evidence="1">
    <location>
        <begin position="84"/>
        <end position="88"/>
    </location>
    <ligand>
        <name>substrate</name>
        <note>ligand shared between two neighboring subunits</note>
    </ligand>
</feature>
<feature type="binding site" description="in other chain" evidence="1">
    <location>
        <position position="97"/>
    </location>
    <ligand>
        <name>substrate</name>
        <note>ligand shared between two neighboring subunits</note>
    </ligand>
</feature>
<feature type="binding site" description="in other chain" evidence="1">
    <location>
        <begin position="129"/>
        <end position="133"/>
    </location>
    <ligand>
        <name>substrate</name>
        <note>ligand shared between two neighboring subunits</note>
    </ligand>
</feature>
<feature type="binding site" evidence="1">
    <location>
        <begin position="154"/>
        <end position="156"/>
    </location>
    <ligand>
        <name>hydrogencarbonate</name>
        <dbReference type="ChEBI" id="CHEBI:17544"/>
    </ligand>
</feature>
<feature type="binding site" description="in other chain" evidence="1">
    <location>
        <position position="155"/>
    </location>
    <ligand>
        <name>substrate</name>
        <note>ligand shared between two neighboring subunits</note>
    </ligand>
</feature>
<feature type="binding site" description="in other chain" evidence="1">
    <location>
        <position position="161"/>
    </location>
    <ligand>
        <name>substrate</name>
        <note>ligand shared between two neighboring subunits</note>
    </ligand>
</feature>
<feature type="binding site" evidence="1">
    <location>
        <position position="258"/>
    </location>
    <ligand>
        <name>substrate</name>
        <note>ligand shared between two neighboring subunits</note>
    </ligand>
</feature>
<feature type="binding site" evidence="1">
    <location>
        <position position="273"/>
    </location>
    <ligand>
        <name>substrate</name>
        <note>ligand shared between two neighboring subunits</note>
    </ligand>
</feature>
<feature type="site" description="Important for catalysis" evidence="1">
    <location>
        <position position="97"/>
    </location>
</feature>
<feature type="site" description="Important for catalysis" evidence="1">
    <location>
        <position position="258"/>
    </location>
</feature>
<reference key="1">
    <citation type="journal article" date="1995" name="Science">
        <title>Whole-genome random sequencing and assembly of Haemophilus influenzae Rd.</title>
        <authorList>
            <person name="Fleischmann R.D."/>
            <person name="Adams M.D."/>
            <person name="White O."/>
            <person name="Clayton R.A."/>
            <person name="Kirkness E.F."/>
            <person name="Kerlavage A.R."/>
            <person name="Bult C.J."/>
            <person name="Tomb J.-F."/>
            <person name="Dougherty B.A."/>
            <person name="Merrick J.M."/>
            <person name="McKenney K."/>
            <person name="Sutton G.G."/>
            <person name="FitzHugh W."/>
            <person name="Fields C.A."/>
            <person name="Gocayne J.D."/>
            <person name="Scott J.D."/>
            <person name="Shirley R."/>
            <person name="Liu L.-I."/>
            <person name="Glodek A."/>
            <person name="Kelley J.M."/>
            <person name="Weidman J.F."/>
            <person name="Phillips C.A."/>
            <person name="Spriggs T."/>
            <person name="Hedblom E."/>
            <person name="Cotton M.D."/>
            <person name="Utterback T.R."/>
            <person name="Hanna M.C."/>
            <person name="Nguyen D.T."/>
            <person name="Saudek D.M."/>
            <person name="Brandon R.C."/>
            <person name="Fine L.D."/>
            <person name="Fritchman J.L."/>
            <person name="Fuhrmann J.L."/>
            <person name="Geoghagen N.S.M."/>
            <person name="Gnehm C.L."/>
            <person name="McDonald L.A."/>
            <person name="Small K.V."/>
            <person name="Fraser C.M."/>
            <person name="Smith H.O."/>
            <person name="Venter J.C."/>
        </authorList>
    </citation>
    <scope>NUCLEOTIDE SEQUENCE [LARGE SCALE GENOMIC DNA]</scope>
    <source>
        <strain>ATCC 51907 / DSM 11121 / KW20 / Rd</strain>
    </source>
</reference>